<proteinExistence type="inferred from homology"/>
<name>UREG_HELPJ</name>
<gene>
    <name evidence="1" type="primary">ureG</name>
    <name type="ordered locus">jhp_0063</name>
</gene>
<comment type="function">
    <text evidence="1">Facilitates the functional incorporation of the urease nickel metallocenter. This process requires GTP hydrolysis, probably effectuated by UreG.</text>
</comment>
<comment type="subunit">
    <text evidence="1">Homodimer. UreH, UreF and UreG form a complex that acts as a GTP-hydrolysis-dependent molecular chaperone, activating the urease apoprotein by helping to assemble the nickel containing metallocenter of UreC. The UreE protein probably delivers the nickel.</text>
</comment>
<comment type="subcellular location">
    <subcellularLocation>
        <location evidence="1">Cytoplasm</location>
    </subcellularLocation>
</comment>
<comment type="similarity">
    <text evidence="1">Belongs to the SIMIBI class G3E GTPase family. UreG subfamily.</text>
</comment>
<sequence>MVKIGVCGPVGSGKTALIEALTRHMSKDYDMAVITNDIYTKEDAEFMCKNSVMPRDRIIGVETGGCPHTAIREDASMNLEAVEEMHGRFPNLELLLIESGGDNLSATFNPELADFTIFVIDVAEGDKIPRKGGPGITRSDLLVINKIDLAPYVGADLKVMERDSKKMRGEKPFIFTNIRAKEGLDDVIAWIKRNALLED</sequence>
<dbReference type="EMBL" id="AE001439">
    <property type="protein sequence ID" value="AAD05647.1"/>
    <property type="molecule type" value="Genomic_DNA"/>
</dbReference>
<dbReference type="PIR" id="C71979">
    <property type="entry name" value="C71979"/>
</dbReference>
<dbReference type="RefSeq" id="WP_000238747.1">
    <property type="nucleotide sequence ID" value="NZ_CP011330.1"/>
</dbReference>
<dbReference type="SMR" id="Q9ZMZ7"/>
<dbReference type="GeneID" id="93236439"/>
<dbReference type="KEGG" id="hpj:jhp_0063"/>
<dbReference type="PATRIC" id="fig|85963.30.peg.971"/>
<dbReference type="eggNOG" id="COG0378">
    <property type="taxonomic scope" value="Bacteria"/>
</dbReference>
<dbReference type="Proteomes" id="UP000000804">
    <property type="component" value="Chromosome"/>
</dbReference>
<dbReference type="GO" id="GO:0005737">
    <property type="term" value="C:cytoplasm"/>
    <property type="evidence" value="ECO:0007669"/>
    <property type="project" value="UniProtKB-SubCell"/>
</dbReference>
<dbReference type="GO" id="GO:0005525">
    <property type="term" value="F:GTP binding"/>
    <property type="evidence" value="ECO:0007669"/>
    <property type="project" value="UniProtKB-KW"/>
</dbReference>
<dbReference type="GO" id="GO:0003924">
    <property type="term" value="F:GTPase activity"/>
    <property type="evidence" value="ECO:0007669"/>
    <property type="project" value="InterPro"/>
</dbReference>
<dbReference type="GO" id="GO:0016151">
    <property type="term" value="F:nickel cation binding"/>
    <property type="evidence" value="ECO:0007669"/>
    <property type="project" value="InterPro"/>
</dbReference>
<dbReference type="GO" id="GO:0043419">
    <property type="term" value="P:urea catabolic process"/>
    <property type="evidence" value="ECO:0007669"/>
    <property type="project" value="InterPro"/>
</dbReference>
<dbReference type="CDD" id="cd05540">
    <property type="entry name" value="UreG"/>
    <property type="match status" value="1"/>
</dbReference>
<dbReference type="FunFam" id="3.40.50.300:FF:000208">
    <property type="entry name" value="Urease accessory protein UreG"/>
    <property type="match status" value="1"/>
</dbReference>
<dbReference type="Gene3D" id="3.40.50.300">
    <property type="entry name" value="P-loop containing nucleotide triphosphate hydrolases"/>
    <property type="match status" value="1"/>
</dbReference>
<dbReference type="HAMAP" id="MF_01389">
    <property type="entry name" value="UreG"/>
    <property type="match status" value="1"/>
</dbReference>
<dbReference type="InterPro" id="IPR003495">
    <property type="entry name" value="CobW/HypB/UreG_nucleotide-bd"/>
</dbReference>
<dbReference type="InterPro" id="IPR027417">
    <property type="entry name" value="P-loop_NTPase"/>
</dbReference>
<dbReference type="InterPro" id="IPR004400">
    <property type="entry name" value="UreG"/>
</dbReference>
<dbReference type="NCBIfam" id="TIGR00101">
    <property type="entry name" value="ureG"/>
    <property type="match status" value="1"/>
</dbReference>
<dbReference type="PANTHER" id="PTHR31715">
    <property type="entry name" value="UREASE ACCESSORY PROTEIN G"/>
    <property type="match status" value="1"/>
</dbReference>
<dbReference type="PANTHER" id="PTHR31715:SF0">
    <property type="entry name" value="UREASE ACCESSORY PROTEIN G"/>
    <property type="match status" value="1"/>
</dbReference>
<dbReference type="Pfam" id="PF02492">
    <property type="entry name" value="cobW"/>
    <property type="match status" value="1"/>
</dbReference>
<dbReference type="PIRSF" id="PIRSF005624">
    <property type="entry name" value="Ni-bind_GTPase"/>
    <property type="match status" value="1"/>
</dbReference>
<dbReference type="SUPFAM" id="SSF52540">
    <property type="entry name" value="P-loop containing nucleoside triphosphate hydrolases"/>
    <property type="match status" value="1"/>
</dbReference>
<feature type="chain" id="PRO_0000067668" description="Urease accessory protein UreG">
    <location>
        <begin position="1"/>
        <end position="199"/>
    </location>
</feature>
<feature type="binding site" evidence="1">
    <location>
        <begin position="8"/>
        <end position="15"/>
    </location>
    <ligand>
        <name>GTP</name>
        <dbReference type="ChEBI" id="CHEBI:37565"/>
    </ligand>
</feature>
<accession>Q9ZMZ7</accession>
<organism>
    <name type="scientific">Helicobacter pylori (strain J99 / ATCC 700824)</name>
    <name type="common">Campylobacter pylori J99</name>
    <dbReference type="NCBI Taxonomy" id="85963"/>
    <lineage>
        <taxon>Bacteria</taxon>
        <taxon>Pseudomonadati</taxon>
        <taxon>Campylobacterota</taxon>
        <taxon>Epsilonproteobacteria</taxon>
        <taxon>Campylobacterales</taxon>
        <taxon>Helicobacteraceae</taxon>
        <taxon>Helicobacter</taxon>
    </lineage>
</organism>
<protein>
    <recommendedName>
        <fullName evidence="1">Urease accessory protein UreG</fullName>
    </recommendedName>
</protein>
<reference key="1">
    <citation type="journal article" date="1999" name="Nature">
        <title>Genomic sequence comparison of two unrelated isolates of the human gastric pathogen Helicobacter pylori.</title>
        <authorList>
            <person name="Alm R.A."/>
            <person name="Ling L.-S.L."/>
            <person name="Moir D.T."/>
            <person name="King B.L."/>
            <person name="Brown E.D."/>
            <person name="Doig P.C."/>
            <person name="Smith D.R."/>
            <person name="Noonan B."/>
            <person name="Guild B.C."/>
            <person name="deJonge B.L."/>
            <person name="Carmel G."/>
            <person name="Tummino P.J."/>
            <person name="Caruso A."/>
            <person name="Uria-Nickelsen M."/>
            <person name="Mills D.M."/>
            <person name="Ives C."/>
            <person name="Gibson R."/>
            <person name="Merberg D."/>
            <person name="Mills S.D."/>
            <person name="Jiang Q."/>
            <person name="Taylor D.E."/>
            <person name="Vovis G.F."/>
            <person name="Trust T.J."/>
        </authorList>
    </citation>
    <scope>NUCLEOTIDE SEQUENCE [LARGE SCALE GENOMIC DNA]</scope>
    <source>
        <strain>J99 / ATCC 700824</strain>
    </source>
</reference>
<keyword id="KW-0143">Chaperone</keyword>
<keyword id="KW-0963">Cytoplasm</keyword>
<keyword id="KW-0342">GTP-binding</keyword>
<keyword id="KW-0996">Nickel insertion</keyword>
<keyword id="KW-0547">Nucleotide-binding</keyword>
<evidence type="ECO:0000255" key="1">
    <source>
        <dbReference type="HAMAP-Rule" id="MF_01389"/>
    </source>
</evidence>